<reference key="1">
    <citation type="journal article" date="1996" name="Microbiology">
        <title>Systematic sequencing of the 283 kb 210 degrees-232 degrees region of the Bacillus subtilis genome containing the skin element and many sporulation genes.</title>
        <authorList>
            <person name="Mizuno M."/>
            <person name="Masuda S."/>
            <person name="Takemaru K."/>
            <person name="Hosono S."/>
            <person name="Sato T."/>
            <person name="Takeuchi M."/>
            <person name="Kobayashi Y."/>
        </authorList>
    </citation>
    <scope>NUCLEOTIDE SEQUENCE [GENOMIC DNA]</scope>
    <source>
        <strain>168 / JH642</strain>
    </source>
</reference>
<reference key="2">
    <citation type="journal article" date="1997" name="Nature">
        <title>The complete genome sequence of the Gram-positive bacterium Bacillus subtilis.</title>
        <authorList>
            <person name="Kunst F."/>
            <person name="Ogasawara N."/>
            <person name="Moszer I."/>
            <person name="Albertini A.M."/>
            <person name="Alloni G."/>
            <person name="Azevedo V."/>
            <person name="Bertero M.G."/>
            <person name="Bessieres P."/>
            <person name="Bolotin A."/>
            <person name="Borchert S."/>
            <person name="Borriss R."/>
            <person name="Boursier L."/>
            <person name="Brans A."/>
            <person name="Braun M."/>
            <person name="Brignell S.C."/>
            <person name="Bron S."/>
            <person name="Brouillet S."/>
            <person name="Bruschi C.V."/>
            <person name="Caldwell B."/>
            <person name="Capuano V."/>
            <person name="Carter N.M."/>
            <person name="Choi S.-K."/>
            <person name="Codani J.-J."/>
            <person name="Connerton I.F."/>
            <person name="Cummings N.J."/>
            <person name="Daniel R.A."/>
            <person name="Denizot F."/>
            <person name="Devine K.M."/>
            <person name="Duesterhoeft A."/>
            <person name="Ehrlich S.D."/>
            <person name="Emmerson P.T."/>
            <person name="Entian K.-D."/>
            <person name="Errington J."/>
            <person name="Fabret C."/>
            <person name="Ferrari E."/>
            <person name="Foulger D."/>
            <person name="Fritz C."/>
            <person name="Fujita M."/>
            <person name="Fujita Y."/>
            <person name="Fuma S."/>
            <person name="Galizzi A."/>
            <person name="Galleron N."/>
            <person name="Ghim S.-Y."/>
            <person name="Glaser P."/>
            <person name="Goffeau A."/>
            <person name="Golightly E.J."/>
            <person name="Grandi G."/>
            <person name="Guiseppi G."/>
            <person name="Guy B.J."/>
            <person name="Haga K."/>
            <person name="Haiech J."/>
            <person name="Harwood C.R."/>
            <person name="Henaut A."/>
            <person name="Hilbert H."/>
            <person name="Holsappel S."/>
            <person name="Hosono S."/>
            <person name="Hullo M.-F."/>
            <person name="Itaya M."/>
            <person name="Jones L.-M."/>
            <person name="Joris B."/>
            <person name="Karamata D."/>
            <person name="Kasahara Y."/>
            <person name="Klaerr-Blanchard M."/>
            <person name="Klein C."/>
            <person name="Kobayashi Y."/>
            <person name="Koetter P."/>
            <person name="Koningstein G."/>
            <person name="Krogh S."/>
            <person name="Kumano M."/>
            <person name="Kurita K."/>
            <person name="Lapidus A."/>
            <person name="Lardinois S."/>
            <person name="Lauber J."/>
            <person name="Lazarevic V."/>
            <person name="Lee S.-M."/>
            <person name="Levine A."/>
            <person name="Liu H."/>
            <person name="Masuda S."/>
            <person name="Mauel C."/>
            <person name="Medigue C."/>
            <person name="Medina N."/>
            <person name="Mellado R.P."/>
            <person name="Mizuno M."/>
            <person name="Moestl D."/>
            <person name="Nakai S."/>
            <person name="Noback M."/>
            <person name="Noone D."/>
            <person name="O'Reilly M."/>
            <person name="Ogawa K."/>
            <person name="Ogiwara A."/>
            <person name="Oudega B."/>
            <person name="Park S.-H."/>
            <person name="Parro V."/>
            <person name="Pohl T.M."/>
            <person name="Portetelle D."/>
            <person name="Porwollik S."/>
            <person name="Prescott A.M."/>
            <person name="Presecan E."/>
            <person name="Pujic P."/>
            <person name="Purnelle B."/>
            <person name="Rapoport G."/>
            <person name="Rey M."/>
            <person name="Reynolds S."/>
            <person name="Rieger M."/>
            <person name="Rivolta C."/>
            <person name="Rocha E."/>
            <person name="Roche B."/>
            <person name="Rose M."/>
            <person name="Sadaie Y."/>
            <person name="Sato T."/>
            <person name="Scanlan E."/>
            <person name="Schleich S."/>
            <person name="Schroeter R."/>
            <person name="Scoffone F."/>
            <person name="Sekiguchi J."/>
            <person name="Sekowska A."/>
            <person name="Seror S.J."/>
            <person name="Serror P."/>
            <person name="Shin B.-S."/>
            <person name="Soldo B."/>
            <person name="Sorokin A."/>
            <person name="Tacconi E."/>
            <person name="Takagi T."/>
            <person name="Takahashi H."/>
            <person name="Takemaru K."/>
            <person name="Takeuchi M."/>
            <person name="Tamakoshi A."/>
            <person name="Tanaka T."/>
            <person name="Terpstra P."/>
            <person name="Tognoni A."/>
            <person name="Tosato V."/>
            <person name="Uchiyama S."/>
            <person name="Vandenbol M."/>
            <person name="Vannier F."/>
            <person name="Vassarotti A."/>
            <person name="Viari A."/>
            <person name="Wambutt R."/>
            <person name="Wedler E."/>
            <person name="Wedler H."/>
            <person name="Weitzenegger T."/>
            <person name="Winters P."/>
            <person name="Wipat A."/>
            <person name="Yamamoto H."/>
            <person name="Yamane K."/>
            <person name="Yasumoto K."/>
            <person name="Yata K."/>
            <person name="Yoshida K."/>
            <person name="Yoshikawa H.-F."/>
            <person name="Zumstein E."/>
            <person name="Yoshikawa H."/>
            <person name="Danchin A."/>
        </authorList>
    </citation>
    <scope>NUCLEOTIDE SEQUENCE [LARGE SCALE GENOMIC DNA]</scope>
    <source>
        <strain>168</strain>
    </source>
</reference>
<reference key="3">
    <citation type="journal article" date="2009" name="Microbiology">
        <title>From a consortium sequence to a unified sequence: the Bacillus subtilis 168 reference genome a decade later.</title>
        <authorList>
            <person name="Barbe V."/>
            <person name="Cruveiller S."/>
            <person name="Kunst F."/>
            <person name="Lenoble P."/>
            <person name="Meurice G."/>
            <person name="Sekowska A."/>
            <person name="Vallenet D."/>
            <person name="Wang T."/>
            <person name="Moszer I."/>
            <person name="Medigue C."/>
            <person name="Danchin A."/>
        </authorList>
    </citation>
    <scope>SEQUENCE REVISION TO 447</scope>
</reference>
<sequence length="448" mass="49732">MSVHSEVLHALLKDPFIQKLIDAEPVFWANSGKKEGPLPRADEWATEIAEAEKRMQRFAPYIAEVFPETKGAKGIIESPLFEVQHMKGKLEAAYQQPFPGRWLLKCDHELPISGSIKARGGIYEVLKYAENLALQEGMLQETDDYRILQEERFTGFFSRYSIAVGSTGNLGLSIGIIGAALGFRVTVHMSADAKQWKKDLLRQKGVTVMEYETDYSEAVNEGRRQAEQDPFCYFIDDEHSRQLFLGYAVAASRLKTQLDCMNIKPSLETPLFVYLPCGVGGGPGGVAFGLKLLYGDDVHVFFAEPTHSPCMLLGLYSGLHEKISVQDIGLDNQTAADGLAVGRPSGFVGKLIEPLLSGCYTVEDNTLYTLLHMLAVSEDKYLEPSALAGMFGPVQLFSTEEGRRYAQKYKMEHAVHVVWGTGGSMVPKDEMAAYNRIGADLLKKRNEK</sequence>
<feature type="chain" id="PRO_0000185608" description="Probable D-serine dehydratase">
    <location>
        <begin position="1"/>
        <end position="448"/>
    </location>
</feature>
<feature type="modified residue" description="N6-(pyridoxal phosphate)lysine" evidence="1">
    <location>
        <position position="117"/>
    </location>
</feature>
<feature type="sequence conflict" description="In Ref. 1; BAA12624." evidence="2" ref="1">
    <original>E</original>
    <variation>G</variation>
    <location>
        <position position="447"/>
    </location>
</feature>
<name>SDHD_BACSU</name>
<protein>
    <recommendedName>
        <fullName>Probable D-serine dehydratase</fullName>
        <ecNumber>4.3.1.18</ecNumber>
    </recommendedName>
    <alternativeName>
        <fullName>D-serine deaminase</fullName>
        <shortName>DSD</shortName>
    </alternativeName>
</protein>
<comment type="catalytic activity">
    <reaction>
        <text>D-serine = pyruvate + NH4(+)</text>
        <dbReference type="Rhea" id="RHEA:13977"/>
        <dbReference type="ChEBI" id="CHEBI:15361"/>
        <dbReference type="ChEBI" id="CHEBI:28938"/>
        <dbReference type="ChEBI" id="CHEBI:35247"/>
        <dbReference type="EC" id="4.3.1.18"/>
    </reaction>
</comment>
<comment type="cofactor">
    <cofactor evidence="1">
        <name>pyridoxal 5'-phosphate</name>
        <dbReference type="ChEBI" id="CHEBI:597326"/>
    </cofactor>
</comment>
<comment type="similarity">
    <text evidence="2">Belongs to the serine/threonine dehydratase family. DsdA subfamily.</text>
</comment>
<keyword id="KW-0456">Lyase</keyword>
<keyword id="KW-0663">Pyridoxal phosphate</keyword>
<keyword id="KW-1185">Reference proteome</keyword>
<evidence type="ECO:0000250" key="1"/>
<evidence type="ECO:0000305" key="2"/>
<organism>
    <name type="scientific">Bacillus subtilis (strain 168)</name>
    <dbReference type="NCBI Taxonomy" id="224308"/>
    <lineage>
        <taxon>Bacteria</taxon>
        <taxon>Bacillati</taxon>
        <taxon>Bacillota</taxon>
        <taxon>Bacilli</taxon>
        <taxon>Bacillales</taxon>
        <taxon>Bacillaceae</taxon>
        <taxon>Bacillus</taxon>
    </lineage>
</organism>
<dbReference type="EC" id="4.3.1.18"/>
<dbReference type="EMBL" id="D84432">
    <property type="protein sequence ID" value="BAA12624.1"/>
    <property type="molecule type" value="Genomic_DNA"/>
</dbReference>
<dbReference type="EMBL" id="AL009126">
    <property type="protein sequence ID" value="CAB14309.2"/>
    <property type="molecule type" value="Genomic_DNA"/>
</dbReference>
<dbReference type="PIR" id="B69965">
    <property type="entry name" value="B69965"/>
</dbReference>
<dbReference type="RefSeq" id="NP_390258.2">
    <property type="nucleotide sequence ID" value="NC_000964.3"/>
</dbReference>
<dbReference type="RefSeq" id="WP_004399082.1">
    <property type="nucleotide sequence ID" value="NZ_OZ025638.1"/>
</dbReference>
<dbReference type="SMR" id="P54555"/>
<dbReference type="FunCoup" id="P54555">
    <property type="interactions" value="55"/>
</dbReference>
<dbReference type="STRING" id="224308.BSU23770"/>
<dbReference type="PaxDb" id="224308-BSU23770"/>
<dbReference type="EnsemblBacteria" id="CAB14309">
    <property type="protein sequence ID" value="CAB14309"/>
    <property type="gene ID" value="BSU_23770"/>
</dbReference>
<dbReference type="GeneID" id="938700"/>
<dbReference type="KEGG" id="bsu:BSU23770"/>
<dbReference type="PATRIC" id="fig|224308.179.peg.2590"/>
<dbReference type="eggNOG" id="COG3048">
    <property type="taxonomic scope" value="Bacteria"/>
</dbReference>
<dbReference type="InParanoid" id="P54555"/>
<dbReference type="OrthoDB" id="9780546at2"/>
<dbReference type="PhylomeDB" id="P54555"/>
<dbReference type="BioCyc" id="BSUB:BSU23770-MONOMER"/>
<dbReference type="Proteomes" id="UP000001570">
    <property type="component" value="Chromosome"/>
</dbReference>
<dbReference type="GO" id="GO:0008721">
    <property type="term" value="F:D-serine ammonia-lyase activity"/>
    <property type="evidence" value="ECO:0000318"/>
    <property type="project" value="GO_Central"/>
</dbReference>
<dbReference type="GO" id="GO:0016836">
    <property type="term" value="F:hydro-lyase activity"/>
    <property type="evidence" value="ECO:0007669"/>
    <property type="project" value="UniProtKB-UniRule"/>
</dbReference>
<dbReference type="GO" id="GO:0030170">
    <property type="term" value="F:pyridoxal phosphate binding"/>
    <property type="evidence" value="ECO:0007669"/>
    <property type="project" value="InterPro"/>
</dbReference>
<dbReference type="GO" id="GO:0036088">
    <property type="term" value="P:D-serine catabolic process"/>
    <property type="evidence" value="ECO:0000318"/>
    <property type="project" value="GO_Central"/>
</dbReference>
<dbReference type="CDD" id="cd06447">
    <property type="entry name" value="D-Ser-dehyd"/>
    <property type="match status" value="1"/>
</dbReference>
<dbReference type="FunFam" id="3.40.50.1100:FF:000018">
    <property type="entry name" value="D-serine dehydratase"/>
    <property type="match status" value="1"/>
</dbReference>
<dbReference type="Gene3D" id="3.40.50.1100">
    <property type="match status" value="2"/>
</dbReference>
<dbReference type="HAMAP" id="MF_01030">
    <property type="entry name" value="D_Ser_dehydrat"/>
    <property type="match status" value="1"/>
</dbReference>
<dbReference type="InterPro" id="IPR011780">
    <property type="entry name" value="D_Ser_am_lyase"/>
</dbReference>
<dbReference type="InterPro" id="IPR050147">
    <property type="entry name" value="Ser/Thr_Dehydratase"/>
</dbReference>
<dbReference type="InterPro" id="IPR000634">
    <property type="entry name" value="Ser/Thr_deHydtase_PyrdxlP-BS"/>
</dbReference>
<dbReference type="InterPro" id="IPR001926">
    <property type="entry name" value="TrpB-like_PALP"/>
</dbReference>
<dbReference type="InterPro" id="IPR036052">
    <property type="entry name" value="TrpB-like_PALP_sf"/>
</dbReference>
<dbReference type="NCBIfam" id="TIGR02035">
    <property type="entry name" value="D_Ser_am_lyase"/>
    <property type="match status" value="1"/>
</dbReference>
<dbReference type="NCBIfam" id="NF002823">
    <property type="entry name" value="PRK02991.1"/>
    <property type="match status" value="1"/>
</dbReference>
<dbReference type="PANTHER" id="PTHR48078:SF9">
    <property type="entry name" value="D-SERINE DEHYDRATASE"/>
    <property type="match status" value="1"/>
</dbReference>
<dbReference type="PANTHER" id="PTHR48078">
    <property type="entry name" value="THREONINE DEHYDRATASE, MITOCHONDRIAL-RELATED"/>
    <property type="match status" value="1"/>
</dbReference>
<dbReference type="Pfam" id="PF00291">
    <property type="entry name" value="PALP"/>
    <property type="match status" value="1"/>
</dbReference>
<dbReference type="SUPFAM" id="SSF53686">
    <property type="entry name" value="Tryptophan synthase beta subunit-like PLP-dependent enzymes"/>
    <property type="match status" value="1"/>
</dbReference>
<dbReference type="PROSITE" id="PS00165">
    <property type="entry name" value="DEHYDRATASE_SER_THR"/>
    <property type="match status" value="1"/>
</dbReference>
<gene>
    <name type="primary">dsdA</name>
    <name type="synonym">yqjR</name>
    <name type="ordered locus">BSU23770</name>
</gene>
<accession>P54555</accession>
<proteinExistence type="inferred from homology"/>